<gene>
    <name type="primary">HSD1</name>
    <name type="ordered locus">At5g50600</name>
    <name type="ORF">MBA10.16</name>
</gene>
<name>HSD1A_ARATH</name>
<evidence type="ECO:0000250" key="1"/>
<evidence type="ECO:0000255" key="2"/>
<evidence type="ECO:0000255" key="3">
    <source>
        <dbReference type="PROSITE-ProRule" id="PRU10001"/>
    </source>
</evidence>
<evidence type="ECO:0000269" key="4">
    <source>
    </source>
</evidence>
<evidence type="ECO:0000269" key="5">
    <source>
    </source>
</evidence>
<evidence type="ECO:0000269" key="6">
    <source>
    </source>
</evidence>
<evidence type="ECO:0000305" key="7"/>
<protein>
    <recommendedName>
        <fullName>11-beta-hydroxysteroid dehydrogenase 1A</fullName>
        <ecNumber evidence="4">1.1.1.146</ecNumber>
    </recommendedName>
    <alternativeName>
        <fullName>17-beta-hydroxysteroid dehydrogenase 1A</fullName>
        <ecNumber>1.1.1.-</ecNumber>
    </alternativeName>
    <alternativeName>
        <fullName>Hydroxysteroid dehydrogenase 1</fullName>
        <shortName>AtHSD1</shortName>
    </alternativeName>
</protein>
<sequence>MELINDFLNLTAPFFTFFGLCFFLPPFYFFKFLQSIFSTIFSENLYGKVVLITGASSGIGEQLAYEYACRGACLALTARRKNRLEEVAEIARELGSPNVVTVHADVSKPDDCRRIVDDTITHFGRLDHLVNNAGMTQISMFENIEDITRTKAVLDTNFWGSVYTTRAALPYLRQSNGKIVAMSSSAAWLTAPRMSFYNASKAALLSFFETMRIELGGDVHITIVTPGYIESELTQGKYFSGEGELIVNQDMRDVQVGPFPVASASGCAKSIVNGVCRKQRYVTEPSWFKVTYLWKVLCPELIEWGCRLLYMTGTGMSEDTALNKRIMDIPGVRSTLYPESIRTPEIKSD</sequence>
<reference key="1">
    <citation type="submission" date="1999-04" db="EMBL/GenBank/DDBJ databases">
        <title>Structural analysis of Arabidopsis thaliana chromosome 5. XI.</title>
        <authorList>
            <person name="Kaneko T."/>
            <person name="Katoh T."/>
            <person name="Asamizu E."/>
            <person name="Sato S."/>
            <person name="Nakamura Y."/>
            <person name="Kotani H."/>
            <person name="Tabata S."/>
        </authorList>
    </citation>
    <scope>NUCLEOTIDE SEQUENCE [LARGE SCALE GENOMIC DNA]</scope>
    <source>
        <strain>cv. Columbia</strain>
    </source>
</reference>
<reference key="2">
    <citation type="journal article" date="2017" name="Plant J.">
        <title>Araport11: a complete reannotation of the Arabidopsis thaliana reference genome.</title>
        <authorList>
            <person name="Cheng C.Y."/>
            <person name="Krishnakumar V."/>
            <person name="Chan A.P."/>
            <person name="Thibaud-Nissen F."/>
            <person name="Schobel S."/>
            <person name="Town C.D."/>
        </authorList>
    </citation>
    <scope>GENOME REANNOTATION</scope>
    <source>
        <strain>cv. Columbia</strain>
    </source>
</reference>
<reference key="3">
    <citation type="journal article" date="2003" name="Science">
        <title>Empirical analysis of transcriptional activity in the Arabidopsis genome.</title>
        <authorList>
            <person name="Yamada K."/>
            <person name="Lim J."/>
            <person name="Dale J.M."/>
            <person name="Chen H."/>
            <person name="Shinn P."/>
            <person name="Palm C.J."/>
            <person name="Southwick A.M."/>
            <person name="Wu H.C."/>
            <person name="Kim C.J."/>
            <person name="Nguyen M."/>
            <person name="Pham P.K."/>
            <person name="Cheuk R.F."/>
            <person name="Karlin-Newmann G."/>
            <person name="Liu S.X."/>
            <person name="Lam B."/>
            <person name="Sakano H."/>
            <person name="Wu T."/>
            <person name="Yu G."/>
            <person name="Miranda M."/>
            <person name="Quach H.L."/>
            <person name="Tripp M."/>
            <person name="Chang C.H."/>
            <person name="Lee J.M."/>
            <person name="Toriumi M.J."/>
            <person name="Chan M.M."/>
            <person name="Tang C.C."/>
            <person name="Onodera C.S."/>
            <person name="Deng J.M."/>
            <person name="Akiyama K."/>
            <person name="Ansari Y."/>
            <person name="Arakawa T."/>
            <person name="Banh J."/>
            <person name="Banno F."/>
            <person name="Bowser L."/>
            <person name="Brooks S.Y."/>
            <person name="Carninci P."/>
            <person name="Chao Q."/>
            <person name="Choy N."/>
            <person name="Enju A."/>
            <person name="Goldsmith A.D."/>
            <person name="Gurjal M."/>
            <person name="Hansen N.F."/>
            <person name="Hayashizaki Y."/>
            <person name="Johnson-Hopson C."/>
            <person name="Hsuan V.W."/>
            <person name="Iida K."/>
            <person name="Karnes M."/>
            <person name="Khan S."/>
            <person name="Koesema E."/>
            <person name="Ishida J."/>
            <person name="Jiang P.X."/>
            <person name="Jones T."/>
            <person name="Kawai J."/>
            <person name="Kamiya A."/>
            <person name="Meyers C."/>
            <person name="Nakajima M."/>
            <person name="Narusaka M."/>
            <person name="Seki M."/>
            <person name="Sakurai T."/>
            <person name="Satou M."/>
            <person name="Tamse R."/>
            <person name="Vaysberg M."/>
            <person name="Wallender E.K."/>
            <person name="Wong C."/>
            <person name="Yamamura Y."/>
            <person name="Yuan S."/>
            <person name="Shinozaki K."/>
            <person name="Davis R.W."/>
            <person name="Theologis A."/>
            <person name="Ecker J.R."/>
        </authorList>
    </citation>
    <scope>NUCLEOTIDE SEQUENCE [LARGE SCALE MRNA]</scope>
    <source>
        <strain>cv. Columbia</strain>
    </source>
</reference>
<reference key="4">
    <citation type="submission" date="2005-03" db="EMBL/GenBank/DDBJ databases">
        <title>Large-scale analysis of RIKEN Arabidopsis full-length (RAFL) cDNAs.</title>
        <authorList>
            <person name="Totoki Y."/>
            <person name="Seki M."/>
            <person name="Ishida J."/>
            <person name="Nakajima M."/>
            <person name="Enju A."/>
            <person name="Kamiya A."/>
            <person name="Narusaka M."/>
            <person name="Shin-i T."/>
            <person name="Nakagawa M."/>
            <person name="Sakamoto N."/>
            <person name="Oishi K."/>
            <person name="Kohara Y."/>
            <person name="Kobayashi M."/>
            <person name="Toyoda A."/>
            <person name="Sakaki Y."/>
            <person name="Sakurai T."/>
            <person name="Iida K."/>
            <person name="Akiyama K."/>
            <person name="Satou M."/>
            <person name="Toyoda T."/>
            <person name="Konagaya A."/>
            <person name="Carninci P."/>
            <person name="Kawai J."/>
            <person name="Hayashizaki Y."/>
            <person name="Shinozaki K."/>
        </authorList>
    </citation>
    <scope>NUCLEOTIDE SEQUENCE [LARGE SCALE MRNA]</scope>
    <source>
        <strain>cv. Columbia</strain>
    </source>
</reference>
<reference key="5">
    <citation type="journal article" date="2004" name="Plant Physiol. Biochem.">
        <title>Protein composition of oil bodies in Arabidopsis thaliana ecotype WS.</title>
        <authorList>
            <person name="Jolivet P."/>
            <person name="Roux E."/>
            <person name="D'Andrea S."/>
            <person name="Davanture M."/>
            <person name="Negroni L."/>
            <person name="Zivy M."/>
            <person name="Chardot T."/>
        </authorList>
    </citation>
    <scope>IDENTIFICATION BY MASS SPECTROMETRY</scope>
    <scope>SUBCELLULAR LOCATION</scope>
</reference>
<reference key="6">
    <citation type="journal article" date="2007" name="Biochimie">
        <title>At5g50600 encodes a member of the short-chain dehydrogenase reductase superfamily with 11beta- and 17beta-hydroxysteroid dehydrogenase activities associated with Arabidopsis thaliana seed oil bodies.</title>
        <authorList>
            <person name="d'Andrea S."/>
            <person name="Canonge M."/>
            <person name="Beopoulos A."/>
            <person name="Jolivet P."/>
            <person name="Hartmann M.A."/>
            <person name="Miquel M."/>
            <person name="Lepiniec L."/>
            <person name="Chardot T."/>
        </authorList>
    </citation>
    <scope>IDENTIFICATION BY MASS SPECTROMETRY</scope>
    <scope>SUBCELLULAR LOCATION</scope>
    <scope>FUNCTION</scope>
    <scope>CATALYTIC ACTIVITY</scope>
</reference>
<reference key="7">
    <citation type="journal article" date="2007" name="Plant Physiol.">
        <title>A putative hydroxysteroid dehydrogenase involved in regulating plant growth and development.</title>
        <authorList>
            <person name="Li F."/>
            <person name="Asami T."/>
            <person name="Wu X."/>
            <person name="Tsang E.W."/>
            <person name="Cutler A.J."/>
        </authorList>
    </citation>
    <scope>GENE FAMILY</scope>
    <scope>DISRUPTION PHENOTYPE</scope>
    <scope>FUNCTION</scope>
    <scope>INDUCTION</scope>
    <scope>TISSUE SPECIFICITY</scope>
</reference>
<reference key="8">
    <citation type="journal article" date="2009" name="Plant Cell Physiol.">
        <title>Regulation of HSD1 in seeds of Arabidopsis thaliana.</title>
        <authorList>
            <person name="Baud S."/>
            <person name="Dichow N.R."/>
            <person name="Kelemen Z."/>
            <person name="d'Andrea S."/>
            <person name="To A."/>
            <person name="Berger N."/>
            <person name="Canonge M."/>
            <person name="Kronenberger J."/>
            <person name="Viterbo D."/>
            <person name="Dubreucq B."/>
            <person name="Lepiniec L."/>
            <person name="Chardot T."/>
            <person name="Miquel M."/>
        </authorList>
    </citation>
    <scope>GENE FAMILY</scope>
    <scope>TISSUE SPECIFICITY</scope>
    <scope>DEVELOPMENTAL STAGE</scope>
    <scope>SUBCELLULAR LOCATION</scope>
    <scope>INDUCTION BY LEC2</scope>
    <scope>FUNCTION</scope>
</reference>
<organism>
    <name type="scientific">Arabidopsis thaliana</name>
    <name type="common">Mouse-ear cress</name>
    <dbReference type="NCBI Taxonomy" id="3702"/>
    <lineage>
        <taxon>Eukaryota</taxon>
        <taxon>Viridiplantae</taxon>
        <taxon>Streptophyta</taxon>
        <taxon>Embryophyta</taxon>
        <taxon>Tracheophyta</taxon>
        <taxon>Spermatophyta</taxon>
        <taxon>Magnoliopsida</taxon>
        <taxon>eudicotyledons</taxon>
        <taxon>Gunneridae</taxon>
        <taxon>Pentapetalae</taxon>
        <taxon>rosids</taxon>
        <taxon>malvids</taxon>
        <taxon>Brassicales</taxon>
        <taxon>Brassicaceae</taxon>
        <taxon>Camelineae</taxon>
        <taxon>Arabidopsis</taxon>
    </lineage>
</organism>
<feature type="chain" id="PRO_0000422278" description="11-beta-hydroxysteroid dehydrogenase 1A">
    <location>
        <begin position="1"/>
        <end position="349"/>
    </location>
</feature>
<feature type="transmembrane region" description="Helical; Signal-anchor for type II membrane protein" evidence="2">
    <location>
        <begin position="10"/>
        <end position="30"/>
    </location>
</feature>
<feature type="active site" description="Proton acceptor" evidence="3">
    <location>
        <position position="197"/>
    </location>
</feature>
<feature type="binding site" evidence="1">
    <location>
        <begin position="54"/>
        <end position="80"/>
    </location>
    <ligand>
        <name>NADP(+)</name>
        <dbReference type="ChEBI" id="CHEBI:58349"/>
    </ligand>
</feature>
<feature type="binding site" evidence="1">
    <location>
        <position position="105"/>
    </location>
    <ligand>
        <name>NADP(+)</name>
        <dbReference type="ChEBI" id="CHEBI:58349"/>
    </ligand>
</feature>
<feature type="binding site" evidence="1">
    <location>
        <position position="184"/>
    </location>
    <ligand>
        <name>substrate</name>
    </ligand>
</feature>
<feature type="binding site" evidence="1">
    <location>
        <begin position="197"/>
        <end position="201"/>
    </location>
    <ligand>
        <name>NADP(+)</name>
        <dbReference type="ChEBI" id="CHEBI:58349"/>
    </ligand>
</feature>
<feature type="binding site" evidence="1">
    <location>
        <position position="201"/>
    </location>
    <ligand>
        <name>NADP(+)</name>
        <dbReference type="ChEBI" id="CHEBI:58349"/>
    </ligand>
</feature>
<proteinExistence type="evidence at protein level"/>
<accession>P0DKC5</accession>
<accession>Q9LUF1</accession>
<comment type="function">
    <text evidence="4 5 6">Catalyzes 11-beta, 17-beta-hydroxysteroid and reduces 17-beta-ketosteroids. Involved in regulating plant growth and development, probably promoting or mediating brassinosteroid effects. Plays a role during seed maturation.</text>
</comment>
<comment type="catalytic activity">
    <reaction evidence="4">
        <text>an 11beta-hydroxysteroid + NADP(+) = an 11-oxosteroid + NADPH + H(+)</text>
        <dbReference type="Rhea" id="RHEA:11388"/>
        <dbReference type="ChEBI" id="CHEBI:15378"/>
        <dbReference type="ChEBI" id="CHEBI:35346"/>
        <dbReference type="ChEBI" id="CHEBI:47787"/>
        <dbReference type="ChEBI" id="CHEBI:57783"/>
        <dbReference type="ChEBI" id="CHEBI:58349"/>
        <dbReference type="EC" id="1.1.1.146"/>
    </reaction>
    <physiologicalReaction direction="left-to-right" evidence="4">
        <dbReference type="Rhea" id="RHEA:11389"/>
    </physiologicalReaction>
</comment>
<comment type="catalytic activity">
    <reaction evidence="4">
        <text>17beta-estradiol + NADP(+) = estrone + NADPH + H(+)</text>
        <dbReference type="Rhea" id="RHEA:24616"/>
        <dbReference type="ChEBI" id="CHEBI:15378"/>
        <dbReference type="ChEBI" id="CHEBI:16469"/>
        <dbReference type="ChEBI" id="CHEBI:17263"/>
        <dbReference type="ChEBI" id="CHEBI:57783"/>
        <dbReference type="ChEBI" id="CHEBI:58349"/>
    </reaction>
    <physiologicalReaction direction="left-to-right" evidence="4">
        <dbReference type="Rhea" id="RHEA:24617"/>
    </physiologicalReaction>
</comment>
<comment type="catalytic activity">
    <reaction evidence="4">
        <text>corticosterone + NADP(+) = 11-dehydrocorticosterone + NADPH + H(+)</text>
        <dbReference type="Rhea" id="RHEA:42200"/>
        <dbReference type="ChEBI" id="CHEBI:15378"/>
        <dbReference type="ChEBI" id="CHEBI:16827"/>
        <dbReference type="ChEBI" id="CHEBI:57783"/>
        <dbReference type="ChEBI" id="CHEBI:58349"/>
        <dbReference type="ChEBI" id="CHEBI:78600"/>
    </reaction>
    <physiologicalReaction direction="left-to-right" evidence="4">
        <dbReference type="Rhea" id="RHEA:42201"/>
    </physiologicalReaction>
</comment>
<comment type="catalytic activity">
    <reaction evidence="4">
        <text>cortisone + NADPH + H(+) = cortisol + NADP(+)</text>
        <dbReference type="Rhea" id="RHEA:68616"/>
        <dbReference type="ChEBI" id="CHEBI:15378"/>
        <dbReference type="ChEBI" id="CHEBI:16962"/>
        <dbReference type="ChEBI" id="CHEBI:17650"/>
        <dbReference type="ChEBI" id="CHEBI:57783"/>
        <dbReference type="ChEBI" id="CHEBI:58349"/>
    </reaction>
    <physiologicalReaction direction="left-to-right" evidence="4">
        <dbReference type="Rhea" id="RHEA:68617"/>
    </physiologicalReaction>
</comment>
<comment type="subcellular location">
    <subcellularLocation>
        <location>Lipid droplet</location>
    </subcellularLocation>
    <subcellularLocation>
        <location>Membrane</location>
        <topology>Single-pass type II membrane protein</topology>
    </subcellularLocation>
</comment>
<comment type="tissue specificity">
    <text evidence="5 6">Expressed in the above-ground part of seedlings, especially in the vascular tissues. Also detected in the buds and silique pedicels. Highly induced in oil-accumulating tissues of maturing seeds.</text>
</comment>
<comment type="developmental stage">
    <text evidence="6">Firstly detected during early seed maturation, at 9 days after anthesis (DAA), peaking at 18 DAA, before falling sharply during late maturation.</text>
</comment>
<comment type="induction">
    <text evidence="5 6">By brassinosteroids (BRs). Up-regulated by LEC2.</text>
</comment>
<comment type="disruption phenotype">
    <text evidence="5">Semidwarf phenotype with reduced sensitivity to brassinosteroids (BRs) and enhanced sensitivity to abscisic acid (ABA) during germination.</text>
</comment>
<comment type="similarity">
    <text evidence="7">Belongs to the short-chain dehydrogenases/reductases (SDR) family.</text>
</comment>
<keyword id="KW-0444">Lipid biosynthesis</keyword>
<keyword id="KW-0551">Lipid droplet</keyword>
<keyword id="KW-0443">Lipid metabolism</keyword>
<keyword id="KW-0472">Membrane</keyword>
<keyword id="KW-0521">NADP</keyword>
<keyword id="KW-0560">Oxidoreductase</keyword>
<keyword id="KW-1185">Reference proteome</keyword>
<keyword id="KW-0735">Signal-anchor</keyword>
<keyword id="KW-0752">Steroid biosynthesis</keyword>
<keyword id="KW-0812">Transmembrane</keyword>
<keyword id="KW-1133">Transmembrane helix</keyword>
<dbReference type="EC" id="1.1.1.146" evidence="4"/>
<dbReference type="EC" id="1.1.1.-"/>
<dbReference type="EMBL" id="AB025619">
    <property type="protein sequence ID" value="BAB09145.1"/>
    <property type="molecule type" value="Genomic_DNA"/>
</dbReference>
<dbReference type="EMBL" id="CP002688">
    <property type="protein sequence ID" value="AED95967.1"/>
    <property type="molecule type" value="Genomic_DNA"/>
</dbReference>
<dbReference type="EMBL" id="AF446888">
    <property type="protein sequence ID" value="AAL38621.1"/>
    <property type="molecule type" value="mRNA"/>
</dbReference>
<dbReference type="EMBL" id="AY052660">
    <property type="protein sequence ID" value="AAK96564.1"/>
    <property type="molecule type" value="mRNA"/>
</dbReference>
<dbReference type="EMBL" id="AY062768">
    <property type="protein sequence ID" value="AAL32846.1"/>
    <property type="molecule type" value="mRNA"/>
</dbReference>
<dbReference type="EMBL" id="AY081653">
    <property type="protein sequence ID" value="AAM10215.1"/>
    <property type="molecule type" value="mRNA"/>
</dbReference>
<dbReference type="EMBL" id="AK221698">
    <property type="protein sequence ID" value="BAD95411.1"/>
    <property type="molecule type" value="mRNA"/>
</dbReference>
<dbReference type="RefSeq" id="NP_568742.1">
    <property type="nucleotide sequence ID" value="NM_124448.5"/>
</dbReference>
<dbReference type="RefSeq" id="NP_680418.1">
    <property type="nucleotide sequence ID" value="NM_148113.3"/>
</dbReference>
<dbReference type="SMR" id="P0DKC5"/>
<dbReference type="BioGRID" id="20375">
    <property type="interactions" value="2"/>
</dbReference>
<dbReference type="BioGRID" id="20387">
    <property type="interactions" value="1"/>
</dbReference>
<dbReference type="FunCoup" id="P0DKC5">
    <property type="interactions" value="170"/>
</dbReference>
<dbReference type="STRING" id="3702.P0DKC5"/>
<dbReference type="iPTMnet" id="P0DKC5"/>
<dbReference type="PaxDb" id="3702-AT5G50600.1"/>
<dbReference type="ProteomicsDB" id="228810"/>
<dbReference type="EnsemblPlants" id="AT5G50600.1">
    <property type="protein sequence ID" value="AT5G50600.1"/>
    <property type="gene ID" value="AT5G50600"/>
</dbReference>
<dbReference type="EnsemblPlants" id="AT5G50700.1">
    <property type="protein sequence ID" value="AT5G50700.1"/>
    <property type="gene ID" value="AT5G50700"/>
</dbReference>
<dbReference type="GeneID" id="835129"/>
<dbReference type="GeneID" id="835141"/>
<dbReference type="Gramene" id="AT5G50600.1">
    <property type="protein sequence ID" value="AT5G50600.1"/>
    <property type="gene ID" value="AT5G50600"/>
</dbReference>
<dbReference type="Gramene" id="AT5G50700.1">
    <property type="protein sequence ID" value="AT5G50700.1"/>
    <property type="gene ID" value="AT5G50700"/>
</dbReference>
<dbReference type="KEGG" id="ath:AT5G50600"/>
<dbReference type="KEGG" id="ath:AT5G50700"/>
<dbReference type="Araport" id="AT5G50600"/>
<dbReference type="TAIR" id="AT5G50600">
    <property type="gene designation" value="HSD1"/>
</dbReference>
<dbReference type="eggNOG" id="KOG1205">
    <property type="taxonomic scope" value="Eukaryota"/>
</dbReference>
<dbReference type="HOGENOM" id="CLU_010194_2_1_1"/>
<dbReference type="InParanoid" id="P0DKC5"/>
<dbReference type="OMA" id="LEWCYRI"/>
<dbReference type="OrthoDB" id="47007at2759"/>
<dbReference type="PhylomeDB" id="P0DKC5"/>
<dbReference type="BioCyc" id="MetaCyc:AT5G50600-MONOMER"/>
<dbReference type="PRO" id="PR:P0DKC5"/>
<dbReference type="Proteomes" id="UP000006548">
    <property type="component" value="Chromosome 5"/>
</dbReference>
<dbReference type="ExpressionAtlas" id="P0DKC5">
    <property type="expression patterns" value="baseline and differential"/>
</dbReference>
<dbReference type="GO" id="GO:0005811">
    <property type="term" value="C:lipid droplet"/>
    <property type="evidence" value="ECO:0007669"/>
    <property type="project" value="UniProtKB-SubCell"/>
</dbReference>
<dbReference type="GO" id="GO:0016020">
    <property type="term" value="C:membrane"/>
    <property type="evidence" value="ECO:0007669"/>
    <property type="project" value="UniProtKB-SubCell"/>
</dbReference>
<dbReference type="GO" id="GO:0102196">
    <property type="term" value="F:cortisol dehydrogenase (NAD+) activity"/>
    <property type="evidence" value="ECO:0007669"/>
    <property type="project" value="RHEA"/>
</dbReference>
<dbReference type="GO" id="GO:0004303">
    <property type="term" value="F:estradiol 17-beta-dehydrogenase [NAD(P)+] activity"/>
    <property type="evidence" value="ECO:0007669"/>
    <property type="project" value="RHEA"/>
</dbReference>
<dbReference type="GO" id="GO:0006694">
    <property type="term" value="P:steroid biosynthetic process"/>
    <property type="evidence" value="ECO:0007669"/>
    <property type="project" value="UniProtKB-KW"/>
</dbReference>
<dbReference type="Gene3D" id="3.40.50.720">
    <property type="entry name" value="NAD(P)-binding Rossmann-like Domain"/>
    <property type="match status" value="1"/>
</dbReference>
<dbReference type="InterPro" id="IPR036291">
    <property type="entry name" value="NAD(P)-bd_dom_sf"/>
</dbReference>
<dbReference type="InterPro" id="IPR020904">
    <property type="entry name" value="Sc_DH/Rdtase_CS"/>
</dbReference>
<dbReference type="InterPro" id="IPR002347">
    <property type="entry name" value="SDR_fam"/>
</dbReference>
<dbReference type="NCBIfam" id="NF004825">
    <property type="entry name" value="PRK06181.1"/>
    <property type="match status" value="1"/>
</dbReference>
<dbReference type="PANTHER" id="PTHR43391:SF89">
    <property type="entry name" value="11-BETA-HYDROXYSTEROID DEHYDROGENASE 1A-RELATED"/>
    <property type="match status" value="1"/>
</dbReference>
<dbReference type="PANTHER" id="PTHR43391">
    <property type="entry name" value="RETINOL DEHYDROGENASE-RELATED"/>
    <property type="match status" value="1"/>
</dbReference>
<dbReference type="Pfam" id="PF00106">
    <property type="entry name" value="adh_short"/>
    <property type="match status" value="1"/>
</dbReference>
<dbReference type="PRINTS" id="PR00081">
    <property type="entry name" value="GDHRDH"/>
</dbReference>
<dbReference type="PRINTS" id="PR00080">
    <property type="entry name" value="SDRFAMILY"/>
</dbReference>
<dbReference type="SUPFAM" id="SSF51735">
    <property type="entry name" value="NAD(P)-binding Rossmann-fold domains"/>
    <property type="match status" value="1"/>
</dbReference>
<dbReference type="PROSITE" id="PS00061">
    <property type="entry name" value="ADH_SHORT"/>
    <property type="match status" value="1"/>
</dbReference>